<dbReference type="EC" id="3.5.4.30" evidence="1"/>
<dbReference type="EMBL" id="BA000035">
    <property type="protein sequence ID" value="BAC19473.1"/>
    <property type="status" value="ALT_INIT"/>
    <property type="molecule type" value="Genomic_DNA"/>
</dbReference>
<dbReference type="RefSeq" id="WP_011076032.1">
    <property type="nucleotide sequence ID" value="NC_004369.1"/>
</dbReference>
<dbReference type="SMR" id="Q8FM44"/>
<dbReference type="STRING" id="196164.gene:10743110"/>
<dbReference type="KEGG" id="cef:CE2663"/>
<dbReference type="eggNOG" id="COG0717">
    <property type="taxonomic scope" value="Bacteria"/>
</dbReference>
<dbReference type="HOGENOM" id="CLU_087476_2_0_11"/>
<dbReference type="OrthoDB" id="9780956at2"/>
<dbReference type="UniPathway" id="UPA00610">
    <property type="reaction ID" value="UER00667"/>
</dbReference>
<dbReference type="Proteomes" id="UP000001409">
    <property type="component" value="Chromosome"/>
</dbReference>
<dbReference type="GO" id="GO:0033973">
    <property type="term" value="F:dCTP deaminase (dUMP-forming) activity"/>
    <property type="evidence" value="ECO:0007669"/>
    <property type="project" value="UniProtKB-UniRule"/>
</dbReference>
<dbReference type="GO" id="GO:0008829">
    <property type="term" value="F:dCTP deaminase activity"/>
    <property type="evidence" value="ECO:0007669"/>
    <property type="project" value="InterPro"/>
</dbReference>
<dbReference type="GO" id="GO:0000166">
    <property type="term" value="F:nucleotide binding"/>
    <property type="evidence" value="ECO:0007669"/>
    <property type="project" value="UniProtKB-KW"/>
</dbReference>
<dbReference type="GO" id="GO:0006226">
    <property type="term" value="P:dUMP biosynthetic process"/>
    <property type="evidence" value="ECO:0007669"/>
    <property type="project" value="UniProtKB-UniRule"/>
</dbReference>
<dbReference type="GO" id="GO:0006229">
    <property type="term" value="P:dUTP biosynthetic process"/>
    <property type="evidence" value="ECO:0007669"/>
    <property type="project" value="InterPro"/>
</dbReference>
<dbReference type="GO" id="GO:0015949">
    <property type="term" value="P:nucleobase-containing small molecule interconversion"/>
    <property type="evidence" value="ECO:0007669"/>
    <property type="project" value="TreeGrafter"/>
</dbReference>
<dbReference type="CDD" id="cd07557">
    <property type="entry name" value="trimeric_dUTPase"/>
    <property type="match status" value="1"/>
</dbReference>
<dbReference type="FunFam" id="2.70.40.10:FF:000005">
    <property type="entry name" value="dCTP deaminase, dUMP-forming"/>
    <property type="match status" value="1"/>
</dbReference>
<dbReference type="Gene3D" id="2.70.40.10">
    <property type="match status" value="1"/>
</dbReference>
<dbReference type="HAMAP" id="MF_00146">
    <property type="entry name" value="dCTP_deaminase"/>
    <property type="match status" value="1"/>
</dbReference>
<dbReference type="InterPro" id="IPR011962">
    <property type="entry name" value="dCTP_deaminase"/>
</dbReference>
<dbReference type="InterPro" id="IPR036157">
    <property type="entry name" value="dUTPase-like_sf"/>
</dbReference>
<dbReference type="InterPro" id="IPR033704">
    <property type="entry name" value="dUTPase_trimeric"/>
</dbReference>
<dbReference type="NCBIfam" id="TIGR02274">
    <property type="entry name" value="dCTP_deam"/>
    <property type="match status" value="1"/>
</dbReference>
<dbReference type="PANTHER" id="PTHR42680">
    <property type="entry name" value="DCTP DEAMINASE"/>
    <property type="match status" value="1"/>
</dbReference>
<dbReference type="PANTHER" id="PTHR42680:SF3">
    <property type="entry name" value="DCTP DEAMINASE"/>
    <property type="match status" value="1"/>
</dbReference>
<dbReference type="Pfam" id="PF22769">
    <property type="entry name" value="DCD"/>
    <property type="match status" value="1"/>
</dbReference>
<dbReference type="SUPFAM" id="SSF51283">
    <property type="entry name" value="dUTPase-like"/>
    <property type="match status" value="1"/>
</dbReference>
<proteinExistence type="inferred from homology"/>
<name>DCDB_COREF</name>
<comment type="function">
    <text evidence="1">Bifunctional enzyme that catalyzes both the deamination of dCTP to dUTP and the hydrolysis of dUTP to dUMP without releasing the toxic dUTP intermediate.</text>
</comment>
<comment type="catalytic activity">
    <reaction evidence="1">
        <text>dCTP + 2 H2O = dUMP + NH4(+) + diphosphate</text>
        <dbReference type="Rhea" id="RHEA:19205"/>
        <dbReference type="ChEBI" id="CHEBI:15377"/>
        <dbReference type="ChEBI" id="CHEBI:28938"/>
        <dbReference type="ChEBI" id="CHEBI:33019"/>
        <dbReference type="ChEBI" id="CHEBI:61481"/>
        <dbReference type="ChEBI" id="CHEBI:246422"/>
        <dbReference type="EC" id="3.5.4.30"/>
    </reaction>
</comment>
<comment type="pathway">
    <text evidence="1">Pyrimidine metabolism; dUMP biosynthesis; dUMP from dCTP: step 1/1.</text>
</comment>
<comment type="subunit">
    <text evidence="1">Homotrimer.</text>
</comment>
<comment type="similarity">
    <text evidence="1">Belongs to the dCTP deaminase family.</text>
</comment>
<comment type="sequence caution" evidence="3">
    <conflict type="erroneous initiation">
        <sequence resource="EMBL-CDS" id="BAC19473"/>
    </conflict>
</comment>
<feature type="chain" id="PRO_0000155981" description="dCTP deaminase, dUMP-forming">
    <location>
        <begin position="1"/>
        <end position="193"/>
    </location>
</feature>
<feature type="region of interest" description="Disordered" evidence="2">
    <location>
        <begin position="160"/>
        <end position="193"/>
    </location>
</feature>
<feature type="compositionally biased region" description="Polar residues" evidence="2">
    <location>
        <begin position="167"/>
        <end position="177"/>
    </location>
</feature>
<feature type="active site" description="Proton donor/acceptor" evidence="1">
    <location>
        <position position="129"/>
    </location>
</feature>
<feature type="binding site" evidence="1">
    <location>
        <begin position="101"/>
        <end position="106"/>
    </location>
    <ligand>
        <name>dCTP</name>
        <dbReference type="ChEBI" id="CHEBI:61481"/>
    </ligand>
</feature>
<feature type="binding site" evidence="1">
    <location>
        <position position="119"/>
    </location>
    <ligand>
        <name>dCTP</name>
        <dbReference type="ChEBI" id="CHEBI:61481"/>
    </ligand>
</feature>
<feature type="binding site" evidence="1">
    <location>
        <begin position="127"/>
        <end position="129"/>
    </location>
    <ligand>
        <name>dCTP</name>
        <dbReference type="ChEBI" id="CHEBI:61481"/>
    </ligand>
</feature>
<feature type="binding site" evidence="1">
    <location>
        <position position="148"/>
    </location>
    <ligand>
        <name>dCTP</name>
        <dbReference type="ChEBI" id="CHEBI:61481"/>
    </ligand>
</feature>
<feature type="binding site" evidence="1">
    <location>
        <position position="162"/>
    </location>
    <ligand>
        <name>dCTP</name>
        <dbReference type="ChEBI" id="CHEBI:61481"/>
    </ligand>
</feature>
<feature type="binding site" evidence="1">
    <location>
        <position position="174"/>
    </location>
    <ligand>
        <name>dCTP</name>
        <dbReference type="ChEBI" id="CHEBI:61481"/>
    </ligand>
</feature>
<feature type="site" description="Important for bifunctional activity" evidence="1">
    <location>
        <begin position="116"/>
        <end position="117"/>
    </location>
</feature>
<gene>
    <name evidence="1" type="primary">dcd</name>
    <name type="ordered locus">CE2663</name>
</gene>
<accession>Q8FM44</accession>
<keyword id="KW-0378">Hydrolase</keyword>
<keyword id="KW-0546">Nucleotide metabolism</keyword>
<keyword id="KW-0547">Nucleotide-binding</keyword>
<keyword id="KW-1185">Reference proteome</keyword>
<organism>
    <name type="scientific">Corynebacterium efficiens (strain DSM 44549 / YS-314 / AJ 12310 / JCM 11189 / NBRC 100395)</name>
    <dbReference type="NCBI Taxonomy" id="196164"/>
    <lineage>
        <taxon>Bacteria</taxon>
        <taxon>Bacillati</taxon>
        <taxon>Actinomycetota</taxon>
        <taxon>Actinomycetes</taxon>
        <taxon>Mycobacteriales</taxon>
        <taxon>Corynebacteriaceae</taxon>
        <taxon>Corynebacterium</taxon>
    </lineage>
</organism>
<protein>
    <recommendedName>
        <fullName evidence="1">dCTP deaminase, dUMP-forming</fullName>
        <ecNumber evidence="1">3.5.4.30</ecNumber>
    </recommendedName>
    <alternativeName>
        <fullName evidence="1">Bifunctional dCTP deaminase:dUTPase</fullName>
    </alternativeName>
    <alternativeName>
        <fullName evidence="1">DCD-DUT</fullName>
    </alternativeName>
</protein>
<sequence length="193" mass="21064">MLLSDRDIRKSIDSGDLGIDPFDPLLIQPSSIDVRMDRYFRVFNNSKYTHIDPKLNQDELTSLVEVADGDPFVLHPGEFVLAATLEKFTLPHHLAGRLEGKSSLGRLGLLTHSTAGFIDPGFSGHITLELSNVANLPITLWPGMKVGQLALFMMSSPAETPYGSGSLGSKYQGQRGPTPSKGYLNFSSEQDSD</sequence>
<evidence type="ECO:0000255" key="1">
    <source>
        <dbReference type="HAMAP-Rule" id="MF_00146"/>
    </source>
</evidence>
<evidence type="ECO:0000256" key="2">
    <source>
        <dbReference type="SAM" id="MobiDB-lite"/>
    </source>
</evidence>
<evidence type="ECO:0000305" key="3"/>
<reference key="1">
    <citation type="journal article" date="2003" name="Genome Res.">
        <title>Comparative complete genome sequence analysis of the amino acid replacements responsible for the thermostability of Corynebacterium efficiens.</title>
        <authorList>
            <person name="Nishio Y."/>
            <person name="Nakamura Y."/>
            <person name="Kawarabayasi Y."/>
            <person name="Usuda Y."/>
            <person name="Kimura E."/>
            <person name="Sugimoto S."/>
            <person name="Matsui K."/>
            <person name="Yamagishi A."/>
            <person name="Kikuchi H."/>
            <person name="Ikeo K."/>
            <person name="Gojobori T."/>
        </authorList>
    </citation>
    <scope>NUCLEOTIDE SEQUENCE [LARGE SCALE GENOMIC DNA]</scope>
    <source>
        <strain>DSM 44549 / YS-314 / AJ 12310 / JCM 11189 / NBRC 100395</strain>
    </source>
</reference>